<comment type="function">
    <text evidence="3">Putative E3 ubiquitin-protein ligase involved in the rhizobial infection process. Plays an important role in the early steps of infection thread formation and in growth and differentiation of nodules.</text>
</comment>
<comment type="catalytic activity">
    <reaction evidence="4">
        <text>S-ubiquitinyl-[E2 ubiquitin-conjugating enzyme]-L-cysteine + [acceptor protein]-L-lysine = [E2 ubiquitin-conjugating enzyme]-L-cysteine + N(6)-ubiquitinyl-[acceptor protein]-L-lysine.</text>
        <dbReference type="EC" id="2.3.2.27"/>
    </reaction>
</comment>
<comment type="pathway">
    <text evidence="4">Protein modification; protein ubiquitination.</text>
</comment>
<protein>
    <recommendedName>
        <fullName evidence="4">Putative E3 ubiquitin-protein ligase LIN-2</fullName>
        <shortName evidence="4">LjLIN</shortName>
        <ecNumber evidence="4">2.3.2.27</ecNumber>
    </recommendedName>
    <alternativeName>
        <fullName evidence="5">RING-type E3 ubiquitin transferase LIN-2</fullName>
    </alternativeName>
</protein>
<gene>
    <name evidence="6" type="primary">LIN</name>
</gene>
<accession>D1FP57</accession>
<accession>D1FP58</accession>
<name>LIN2_LOTJA</name>
<organism>
    <name type="scientific">Lotus japonicus</name>
    <name type="common">Lotus corniculatus var. japonicus</name>
    <dbReference type="NCBI Taxonomy" id="34305"/>
    <lineage>
        <taxon>Eukaryota</taxon>
        <taxon>Viridiplantae</taxon>
        <taxon>Streptophyta</taxon>
        <taxon>Embryophyta</taxon>
        <taxon>Tracheophyta</taxon>
        <taxon>Spermatophyta</taxon>
        <taxon>Magnoliopsida</taxon>
        <taxon>eudicotyledons</taxon>
        <taxon>Gunneridae</taxon>
        <taxon>Pentapetalae</taxon>
        <taxon>rosids</taxon>
        <taxon>fabids</taxon>
        <taxon>Fabales</taxon>
        <taxon>Fabaceae</taxon>
        <taxon>Papilionoideae</taxon>
        <taxon>50 kb inversion clade</taxon>
        <taxon>NPAAA clade</taxon>
        <taxon>Hologalegina</taxon>
        <taxon>robinioid clade</taxon>
        <taxon>Loteae</taxon>
        <taxon>Lotus</taxon>
    </lineage>
</organism>
<feature type="chain" id="PRO_0000413000" description="Putative E3 ubiquitin-protein ligase LIN-2">
    <location>
        <begin position="1"/>
        <end position="1485"/>
    </location>
</feature>
<feature type="domain" description="U-box">
    <location>
        <begin position="510"/>
        <end position="585"/>
    </location>
</feature>
<feature type="repeat" description="WD 1" evidence="1">
    <location>
        <begin position="1194"/>
        <end position="1232"/>
    </location>
</feature>
<feature type="repeat" description="WD 2" evidence="1">
    <location>
        <begin position="1246"/>
        <end position="1283"/>
    </location>
</feature>
<feature type="repeat" description="WD 3" evidence="1">
    <location>
        <begin position="1409"/>
        <end position="1448"/>
    </location>
</feature>
<feature type="repeat" description="WD 4" evidence="1">
    <location>
        <begin position="1454"/>
        <end position="1485"/>
    </location>
</feature>
<feature type="region of interest" description="Disordered" evidence="2">
    <location>
        <begin position="337"/>
        <end position="363"/>
    </location>
</feature>
<feature type="region of interest" description="Disordered" evidence="2">
    <location>
        <begin position="384"/>
        <end position="450"/>
    </location>
</feature>
<feature type="region of interest" description="Disordered" evidence="2">
    <location>
        <begin position="462"/>
        <end position="507"/>
    </location>
</feature>
<feature type="compositionally biased region" description="Acidic residues" evidence="2">
    <location>
        <begin position="337"/>
        <end position="353"/>
    </location>
</feature>
<feature type="compositionally biased region" description="Low complexity" evidence="2">
    <location>
        <begin position="438"/>
        <end position="450"/>
    </location>
</feature>
<feature type="compositionally biased region" description="Polar residues" evidence="2">
    <location>
        <begin position="466"/>
        <end position="484"/>
    </location>
</feature>
<feature type="mutagenesis site" description="In Ljsym7; impaired nodulation and rhizobial infection." evidence="3">
    <original>D</original>
    <variation>N</variation>
    <location>
        <position position="1267"/>
    </location>
</feature>
<keyword id="KW-0536">Nodulation</keyword>
<keyword id="KW-0677">Repeat</keyword>
<keyword id="KW-0808">Transferase</keyword>
<keyword id="KW-0853">WD repeat</keyword>
<proteinExistence type="evidence at protein level"/>
<reference evidence="5 6" key="1">
    <citation type="journal article" date="2009" name="Plant Physiol.">
        <title>LIN, a novel type of U-box/WD40 protein, controls early infection by rhizobia in legumes.</title>
        <authorList>
            <person name="Kiss E."/>
            <person name="Olah B."/>
            <person name="Kalo P."/>
            <person name="Morales M."/>
            <person name="Heckmann A.B."/>
            <person name="Borbola A."/>
            <person name="Lozsa A."/>
            <person name="Kontar K."/>
            <person name="Middleton P."/>
            <person name="Downie J.A."/>
            <person name="Oldroyd G.E."/>
            <person name="Endre G."/>
        </authorList>
    </citation>
    <scope>NUCLEOTIDE SEQUENCE [MRNA]</scope>
    <scope>FUNCTION</scope>
    <scope>MUTAGENESIS OF ASP-1267</scope>
</reference>
<evidence type="ECO:0000255" key="1"/>
<evidence type="ECO:0000256" key="2">
    <source>
        <dbReference type="SAM" id="MobiDB-lite"/>
    </source>
</evidence>
<evidence type="ECO:0000269" key="3">
    <source>
    </source>
</evidence>
<evidence type="ECO:0000303" key="4">
    <source>
    </source>
</evidence>
<evidence type="ECO:0000305" key="5"/>
<evidence type="ECO:0000312" key="6">
    <source>
        <dbReference type="EMBL" id="ACL14423.1"/>
    </source>
</evidence>
<sequence>MAGNFRFMMDQKDIVRFLTTTVDSFIQDRLINKEQRTQHKEQCAERLAAEDGSGDKDTEVEYSDQAVLANLDWGIEALEEAINTYNMETKLARLDYAEKMLQVCAMLNPKQKIAGVPNSYLSAWAHLNLSYLWKLRNNVQNCISHALEMFIVDPFFTRIDFAPELWKSLFLPHMSSIVGWYSEERHRLMMEVIPDSADLSFTADFEQFFNESLVLTMRPHQLEKLQKLEQLYGESLDENTKLYAKYYNDCMNSDSSSSKKAVPMLPIAEPPMTPLHELSRTIPDFVKFGPILPKSAGFSLAPRSKDVLNETIRENVTSSNLKEEKLSIWGAKDTIIEENEDDSDSELDNESVDSDDKNNIFSPGMKMMKYEGVETKVDLSCQRNQIPSPDIFSPLDSPRTAPNNSSPNPDMHSKRDSKFLRLSSSRIREPTISDSLTSSPDISIDNISNADNEVMVRNNIKRKNDSQTPSMNQDNENSLVLNDSSHCESEDGYQSSSSLPKLEKLSMGSKPPKDFVCPITGQIFCDPVTLETGQTYERKAIQEWLRTGNTTCPITRQPLSASILPKTNYVLKRLITSWKEQNPELAQEFSNVNTPRGSSCSPSAKDIPMLSTRQRTTDSPNHKNKDYARQRSNRFMPAAITTSPTSVLSQAAVETIVNSLKPYISSLCTSENLPECEEAVLKIARLLKDSKTNPQIHSYLSKPTIINGLVEILSASRNREVLRTSIYILSELIFTDDSVAETLNSVDSDFDCLATLLKNGLAEAALLIYQLRPVFAQLSAHELIPSLVDVIQNKNEELDDFQLVIDPKDAAIAILEQTLMGGDEYSRSLNASSVISANGIPTLVKYLERMEGRRSVVSVLLCCMQAEKSCKNLIANRIELSPVLELFHSGNDSVRGTCVEFLSELVQLNRRTSCNQLLHTIKDEGAFSTMHTFLVYLQMAPMEHQLAVASLLLQLDLLAEPRKMSIYREEAVETLIEALWQKDFSNTQMKALDALLFLIGHISSSGKSYTEAWLLKIAGFDQPYNALMKVEQLGQHDNDLIETMEDEKNALNSWQKRIASVLCNHENGSIFKALEECLKSNSLKMAKSCLVLATWLTRMLYTLPDTGVRDVARKSLLEEVIKVLHSSKSLEDMILVTLSLYPFISDPTVHEVLRVYAKSIYRILRKLKKYSTVAADILKALLNLNSVDVTELWSCKEVVELDLSSNGEVLSLHYLNGQVLSGLMDGTSKVCDARKRIPRVIQETHEHTKAVTSLCSSGDRLYSASLDKTIRVWTIKSDGIKCIDVYDIKEAVHELAANDKLACYVSQGTGVKVFNWSEAPKLINFSKYVKSLAVAGDKLYCGCSGYSIQEVDLSTYTSNSFFTGTRKLLGKQTIHSLQIHDDYLFACVSSVDATAGKIFSLSQKMVVGSLSTGLDIHRIAINSDFIFAGTKFGTIEVWLKDKFTRVASIQMAGGHTKITSLVSDVDGMMLFVGSSDGKIQVWALD</sequence>
<dbReference type="EC" id="2.3.2.27" evidence="4"/>
<dbReference type="EMBL" id="EU926664">
    <property type="protein sequence ID" value="ACL14423.1"/>
    <property type="molecule type" value="mRNA"/>
</dbReference>
<dbReference type="EMBL" id="EU926665">
    <property type="protein sequence ID" value="ACL14424.1"/>
    <property type="molecule type" value="mRNA"/>
</dbReference>
<dbReference type="SMR" id="D1FP57"/>
<dbReference type="UniPathway" id="UPA00143"/>
<dbReference type="GO" id="GO:0004842">
    <property type="term" value="F:ubiquitin-protein transferase activity"/>
    <property type="evidence" value="ECO:0007669"/>
    <property type="project" value="InterPro"/>
</dbReference>
<dbReference type="GO" id="GO:0009877">
    <property type="term" value="P:nodulation"/>
    <property type="evidence" value="ECO:0007669"/>
    <property type="project" value="UniProtKB-KW"/>
</dbReference>
<dbReference type="GO" id="GO:0016567">
    <property type="term" value="P:protein ubiquitination"/>
    <property type="evidence" value="ECO:0007669"/>
    <property type="project" value="UniProtKB-UniPathway"/>
</dbReference>
<dbReference type="CDD" id="cd16664">
    <property type="entry name" value="RING-Ubox_PUB"/>
    <property type="match status" value="1"/>
</dbReference>
<dbReference type="Gene3D" id="1.25.10.10">
    <property type="entry name" value="Leucine-rich Repeat Variant"/>
    <property type="match status" value="1"/>
</dbReference>
<dbReference type="Gene3D" id="2.130.10.10">
    <property type="entry name" value="YVTN repeat-like/Quinoprotein amine dehydrogenase"/>
    <property type="match status" value="2"/>
</dbReference>
<dbReference type="Gene3D" id="3.30.40.10">
    <property type="entry name" value="Zinc/RING finger domain, C3HC4 (zinc finger)"/>
    <property type="match status" value="1"/>
</dbReference>
<dbReference type="InterPro" id="IPR011989">
    <property type="entry name" value="ARM-like"/>
</dbReference>
<dbReference type="InterPro" id="IPR016024">
    <property type="entry name" value="ARM-type_fold"/>
</dbReference>
<dbReference type="InterPro" id="IPR055566">
    <property type="entry name" value="ARM_LIN"/>
</dbReference>
<dbReference type="InterPro" id="IPR056514">
    <property type="entry name" value="ARM_LIN_2nd"/>
</dbReference>
<dbReference type="InterPro" id="IPR052858">
    <property type="entry name" value="E3_ubiquitin-ligase_LIN"/>
</dbReference>
<dbReference type="InterPro" id="IPR056512">
    <property type="entry name" value="LIN_N"/>
</dbReference>
<dbReference type="InterPro" id="IPR045210">
    <property type="entry name" value="RING-Ubox_PUB"/>
</dbReference>
<dbReference type="InterPro" id="IPR003613">
    <property type="entry name" value="Ubox_domain"/>
</dbReference>
<dbReference type="InterPro" id="IPR015943">
    <property type="entry name" value="WD40/YVTN_repeat-like_dom_sf"/>
</dbReference>
<dbReference type="InterPro" id="IPR036322">
    <property type="entry name" value="WD40_repeat_dom_sf"/>
</dbReference>
<dbReference type="InterPro" id="IPR001680">
    <property type="entry name" value="WD40_rpt"/>
</dbReference>
<dbReference type="InterPro" id="IPR013083">
    <property type="entry name" value="Znf_RING/FYVE/PHD"/>
</dbReference>
<dbReference type="PANTHER" id="PTHR47446">
    <property type="entry name" value="RING-TYPE E3 UBIQUITIN TRANSFERASE"/>
    <property type="match status" value="1"/>
</dbReference>
<dbReference type="PANTHER" id="PTHR47446:SF3">
    <property type="entry name" value="RING-TYPE E3 UBIQUITIN TRANSFERASE"/>
    <property type="match status" value="1"/>
</dbReference>
<dbReference type="Pfam" id="PF23568">
    <property type="entry name" value="ARM_LIN"/>
    <property type="match status" value="1"/>
</dbReference>
<dbReference type="Pfam" id="PF23654">
    <property type="entry name" value="ARM_LIN_2nd"/>
    <property type="match status" value="1"/>
</dbReference>
<dbReference type="Pfam" id="PF23628">
    <property type="entry name" value="ARM_LIN_C"/>
    <property type="match status" value="1"/>
</dbReference>
<dbReference type="Pfam" id="PF04564">
    <property type="entry name" value="U-box"/>
    <property type="match status" value="1"/>
</dbReference>
<dbReference type="Pfam" id="PF00400">
    <property type="entry name" value="WD40"/>
    <property type="match status" value="2"/>
</dbReference>
<dbReference type="SMART" id="SM00504">
    <property type="entry name" value="Ubox"/>
    <property type="match status" value="1"/>
</dbReference>
<dbReference type="SMART" id="SM00320">
    <property type="entry name" value="WD40"/>
    <property type="match status" value="3"/>
</dbReference>
<dbReference type="SUPFAM" id="SSF48371">
    <property type="entry name" value="ARM repeat"/>
    <property type="match status" value="1"/>
</dbReference>
<dbReference type="SUPFAM" id="SSF57850">
    <property type="entry name" value="RING/U-box"/>
    <property type="match status" value="1"/>
</dbReference>
<dbReference type="SUPFAM" id="SSF50978">
    <property type="entry name" value="WD40 repeat-like"/>
    <property type="match status" value="1"/>
</dbReference>
<dbReference type="PROSITE" id="PS51698">
    <property type="entry name" value="U_BOX"/>
    <property type="match status" value="1"/>
</dbReference>
<dbReference type="PROSITE" id="PS50082">
    <property type="entry name" value="WD_REPEATS_2"/>
    <property type="match status" value="2"/>
</dbReference>
<dbReference type="PROSITE" id="PS50294">
    <property type="entry name" value="WD_REPEATS_REGION"/>
    <property type="match status" value="2"/>
</dbReference>